<comment type="function">
    <text evidence="1">Is involved in L-lactate degradation and allows cells to grow with lactate as the sole carbon source.</text>
</comment>
<comment type="similarity">
    <text evidence="1">Belongs to the LutA/YkgE family.</text>
</comment>
<evidence type="ECO:0000255" key="1">
    <source>
        <dbReference type="HAMAP-Rule" id="MF_02105"/>
    </source>
</evidence>
<proteinExistence type="inferred from homology"/>
<sequence>MKVSLFITCLSDVFFPQVGKSVVEIMNQCGVELDFPEGQTCCGQPAYNSGYQEDAKLAAKQMIKAFEHSEYIVTPSGSCASMVHHYYKEMFKGDSEWYEKAVHLADRTYELTDFLVNILGKNDWKSKLVEKAVFHQSCHMSRALGIKEEPLKLLSQVEGLDIKELPYCQDCCGFGGTFAVKMSSISETMVDEKIKHIEATEANLLIGADMGCLMNIGGRLRRENKNIQVLHVAEVLAKGLNK</sequence>
<accession>B7JF51</accession>
<organism>
    <name type="scientific">Bacillus cereus (strain AH820)</name>
    <dbReference type="NCBI Taxonomy" id="405535"/>
    <lineage>
        <taxon>Bacteria</taxon>
        <taxon>Bacillati</taxon>
        <taxon>Bacillota</taxon>
        <taxon>Bacilli</taxon>
        <taxon>Bacillales</taxon>
        <taxon>Bacillaceae</taxon>
        <taxon>Bacillus</taxon>
        <taxon>Bacillus cereus group</taxon>
    </lineage>
</organism>
<gene>
    <name evidence="1" type="primary">lutA2</name>
    <name type="ordered locus">BCAH820_3263</name>
</gene>
<name>LUTA2_BACC0</name>
<dbReference type="EMBL" id="CP001283">
    <property type="protein sequence ID" value="ACK87724.1"/>
    <property type="molecule type" value="Genomic_DNA"/>
</dbReference>
<dbReference type="RefSeq" id="WP_000868788.1">
    <property type="nucleotide sequence ID" value="NC_011773.1"/>
</dbReference>
<dbReference type="SMR" id="B7JF51"/>
<dbReference type="KEGG" id="bcu:BCAH820_3263"/>
<dbReference type="HOGENOM" id="CLU_023081_1_0_9"/>
<dbReference type="Proteomes" id="UP000001363">
    <property type="component" value="Chromosome"/>
</dbReference>
<dbReference type="GO" id="GO:0005829">
    <property type="term" value="C:cytosol"/>
    <property type="evidence" value="ECO:0007669"/>
    <property type="project" value="TreeGrafter"/>
</dbReference>
<dbReference type="GO" id="GO:0016491">
    <property type="term" value="F:oxidoreductase activity"/>
    <property type="evidence" value="ECO:0007669"/>
    <property type="project" value="UniProtKB-ARBA"/>
</dbReference>
<dbReference type="GO" id="GO:0006089">
    <property type="term" value="P:lactate metabolic process"/>
    <property type="evidence" value="ECO:0007669"/>
    <property type="project" value="UniProtKB-UniRule"/>
</dbReference>
<dbReference type="HAMAP" id="MF_02105">
    <property type="entry name" value="LutA"/>
    <property type="match status" value="1"/>
</dbReference>
<dbReference type="InterPro" id="IPR004017">
    <property type="entry name" value="Cys_rich_dom"/>
</dbReference>
<dbReference type="InterPro" id="IPR022822">
    <property type="entry name" value="LutA"/>
</dbReference>
<dbReference type="PANTHER" id="PTHR30296:SF0">
    <property type="entry name" value="LACTATE UTILIZATION PROTEIN A"/>
    <property type="match status" value="1"/>
</dbReference>
<dbReference type="PANTHER" id="PTHR30296">
    <property type="entry name" value="UNCHARACTERIZED PROTEIN YKGE"/>
    <property type="match status" value="1"/>
</dbReference>
<dbReference type="Pfam" id="PF02754">
    <property type="entry name" value="CCG"/>
    <property type="match status" value="2"/>
</dbReference>
<protein>
    <recommendedName>
        <fullName evidence="1">Lactate utilization protein A 2</fullName>
    </recommendedName>
</protein>
<reference key="1">
    <citation type="submission" date="2008-10" db="EMBL/GenBank/DDBJ databases">
        <title>Genome sequence of Bacillus cereus AH820.</title>
        <authorList>
            <person name="Dodson R.J."/>
            <person name="Durkin A.S."/>
            <person name="Rosovitz M.J."/>
            <person name="Rasko D.A."/>
            <person name="Hoffmaster A."/>
            <person name="Ravel J."/>
            <person name="Sutton G."/>
        </authorList>
    </citation>
    <scope>NUCLEOTIDE SEQUENCE [LARGE SCALE GENOMIC DNA]</scope>
    <source>
        <strain>AH820</strain>
    </source>
</reference>
<feature type="chain" id="PRO_0000384026" description="Lactate utilization protein A 2">
    <location>
        <begin position="1"/>
        <end position="242"/>
    </location>
</feature>